<gene>
    <name type="primary">GNAI3</name>
</gene>
<evidence type="ECO:0000250" key="1"/>
<evidence type="ECO:0000250" key="2">
    <source>
        <dbReference type="UniProtKB" id="P08753"/>
    </source>
</evidence>
<evidence type="ECO:0000250" key="3">
    <source>
        <dbReference type="UniProtKB" id="Q9DC51"/>
    </source>
</evidence>
<evidence type="ECO:0000255" key="4">
    <source>
        <dbReference type="PROSITE-ProRule" id="PRU01230"/>
    </source>
</evidence>
<evidence type="ECO:0000269" key="5">
    <source>
    </source>
</evidence>
<evidence type="ECO:0000269" key="6">
    <source>
    </source>
</evidence>
<evidence type="ECO:0000269" key="7">
    <source>
    </source>
</evidence>
<evidence type="ECO:0000269" key="8">
    <source>
    </source>
</evidence>
<evidence type="ECO:0000269" key="9">
    <source>
    </source>
</evidence>
<evidence type="ECO:0000269" key="10">
    <source>
    </source>
</evidence>
<evidence type="ECO:0000269" key="11">
    <source>
    </source>
</evidence>
<evidence type="ECO:0000269" key="12">
    <source>
    </source>
</evidence>
<evidence type="ECO:0000269" key="13">
    <source>
    </source>
</evidence>
<evidence type="ECO:0000269" key="14">
    <source>
    </source>
</evidence>
<evidence type="ECO:0000269" key="15">
    <source>
    </source>
</evidence>
<evidence type="ECO:0000269" key="16">
    <source>
    </source>
</evidence>
<evidence type="ECO:0000269" key="17">
    <source>
    </source>
</evidence>
<evidence type="ECO:0000269" key="18">
    <source>
    </source>
</evidence>
<evidence type="ECO:0000269" key="19">
    <source>
    </source>
</evidence>
<evidence type="ECO:0000269" key="20">
    <source>
    </source>
</evidence>
<evidence type="ECO:0000269" key="21">
    <source>
    </source>
</evidence>
<evidence type="ECO:0000269" key="22">
    <source>
    </source>
</evidence>
<evidence type="ECO:0000269" key="23">
    <source>
    </source>
</evidence>
<evidence type="ECO:0000305" key="24"/>
<evidence type="ECO:0007744" key="25">
    <source>
        <dbReference type="PDB" id="2IHB"/>
    </source>
</evidence>
<evidence type="ECO:0007744" key="26">
    <source>
        <dbReference type="PDB" id="2ODE"/>
    </source>
</evidence>
<evidence type="ECO:0007744" key="27">
    <source>
        <dbReference type="PDB" id="2V4Z"/>
    </source>
</evidence>
<evidence type="ECO:0007744" key="28">
    <source>
        <dbReference type="PDB" id="4G5O"/>
    </source>
</evidence>
<evidence type="ECO:0007744" key="29">
    <source>
        <dbReference type="PDB" id="4G5R"/>
    </source>
</evidence>
<evidence type="ECO:0007744" key="30">
    <source>
        <dbReference type="PDB" id="4G5S"/>
    </source>
</evidence>
<evidence type="ECO:0007744" key="31">
    <source>
        <dbReference type="PDB" id="7X6I"/>
    </source>
</evidence>
<evidence type="ECO:0007744" key="32">
    <source>
        <dbReference type="PDB" id="8GVX"/>
    </source>
</evidence>
<evidence type="ECO:0007829" key="33">
    <source>
        <dbReference type="PDB" id="2ODE"/>
    </source>
</evidence>
<evidence type="ECO:0007829" key="34">
    <source>
        <dbReference type="PDB" id="7T10"/>
    </source>
</evidence>
<evidence type="ECO:0007829" key="35">
    <source>
        <dbReference type="PDB" id="8JD6"/>
    </source>
</evidence>
<evidence type="ECO:0007829" key="36">
    <source>
        <dbReference type="PDB" id="8SZH"/>
    </source>
</evidence>
<accession>P08754</accession>
<accession>P17539</accession>
<accession>Q5TZX1</accession>
<feature type="initiator methionine" description="Removed" evidence="15">
    <location>
        <position position="1"/>
    </location>
</feature>
<feature type="chain" id="PRO_0000203692" description="Guanine nucleotide-binding protein G(i) subunit alpha-3">
    <location>
        <begin position="2"/>
        <end position="354"/>
    </location>
</feature>
<feature type="domain" description="G-alpha" evidence="4">
    <location>
        <begin position="32"/>
        <end position="354"/>
    </location>
</feature>
<feature type="region of interest" description="G1 motif" evidence="4">
    <location>
        <begin position="35"/>
        <end position="48"/>
    </location>
</feature>
<feature type="region of interest" description="G2 motif" evidence="4">
    <location>
        <begin position="173"/>
        <end position="181"/>
    </location>
</feature>
<feature type="region of interest" description="G3 motif" evidence="4">
    <location>
        <begin position="196"/>
        <end position="205"/>
    </location>
</feature>
<feature type="region of interest" description="G4 motif" evidence="4">
    <location>
        <begin position="265"/>
        <end position="272"/>
    </location>
</feature>
<feature type="region of interest" description="G5 motif" evidence="4">
    <location>
        <begin position="324"/>
        <end position="329"/>
    </location>
</feature>
<feature type="binding site" evidence="22 31 32">
    <location>
        <position position="42"/>
    </location>
    <ligand>
        <name>GTP</name>
        <dbReference type="ChEBI" id="CHEBI:37565"/>
    </ligand>
</feature>
<feature type="binding site" evidence="25 26 27 28 29 30">
    <location>
        <position position="43"/>
    </location>
    <ligand>
        <name>GDP</name>
        <dbReference type="ChEBI" id="CHEBI:58189"/>
    </ligand>
</feature>
<feature type="binding site" evidence="22 31 32">
    <location>
        <position position="43"/>
    </location>
    <ligand>
        <name>GTP</name>
        <dbReference type="ChEBI" id="CHEBI:37565"/>
    </ligand>
</feature>
<feature type="binding site" evidence="25 26 27 28 29 30">
    <location>
        <position position="44"/>
    </location>
    <ligand>
        <name>GDP</name>
        <dbReference type="ChEBI" id="CHEBI:58189"/>
    </ligand>
</feature>
<feature type="binding site" evidence="22 31 32">
    <location>
        <position position="44"/>
    </location>
    <ligand>
        <name>GTP</name>
        <dbReference type="ChEBI" id="CHEBI:37565"/>
    </ligand>
</feature>
<feature type="binding site" evidence="25 26 27 28 29 30">
    <location>
        <position position="45"/>
    </location>
    <ligand>
        <name>GDP</name>
        <dbReference type="ChEBI" id="CHEBI:58189"/>
    </ligand>
</feature>
<feature type="binding site" evidence="22 31 32">
    <location>
        <position position="45"/>
    </location>
    <ligand>
        <name>GTP</name>
        <dbReference type="ChEBI" id="CHEBI:37565"/>
    </ligand>
</feature>
<feature type="binding site" evidence="25 26 27 28 29 30">
    <location>
        <position position="46"/>
    </location>
    <ligand>
        <name>GDP</name>
        <dbReference type="ChEBI" id="CHEBI:58189"/>
    </ligand>
</feature>
<feature type="binding site" evidence="22 31 32">
    <location>
        <position position="46"/>
    </location>
    <ligand>
        <name>GTP</name>
        <dbReference type="ChEBI" id="CHEBI:37565"/>
    </ligand>
</feature>
<feature type="binding site" evidence="25 26 27 28 29 30">
    <location>
        <position position="47"/>
    </location>
    <ligand>
        <name>GDP</name>
        <dbReference type="ChEBI" id="CHEBI:58189"/>
    </ligand>
</feature>
<feature type="binding site" evidence="22 31 32">
    <location>
        <position position="47"/>
    </location>
    <ligand>
        <name>GTP</name>
        <dbReference type="ChEBI" id="CHEBI:37565"/>
    </ligand>
</feature>
<feature type="binding site" evidence="8 25 26 27">
    <location>
        <position position="47"/>
    </location>
    <ligand>
        <name>Mg(2+)</name>
        <dbReference type="ChEBI" id="CHEBI:18420"/>
    </ligand>
</feature>
<feature type="binding site" evidence="25 26 27 28 29 30">
    <location>
        <position position="48"/>
    </location>
    <ligand>
        <name>GDP</name>
        <dbReference type="ChEBI" id="CHEBI:58189"/>
    </ligand>
</feature>
<feature type="binding site" evidence="22 31 32">
    <location>
        <position position="48"/>
    </location>
    <ligand>
        <name>GTP</name>
        <dbReference type="ChEBI" id="CHEBI:37565"/>
    </ligand>
</feature>
<feature type="binding site" evidence="22 31 32">
    <location>
        <position position="150"/>
    </location>
    <ligand>
        <name>GTP</name>
        <dbReference type="ChEBI" id="CHEBI:37565"/>
    </ligand>
</feature>
<feature type="binding site" evidence="29">
    <location>
        <position position="151"/>
    </location>
    <ligand>
        <name>GDP</name>
        <dbReference type="ChEBI" id="CHEBI:58189"/>
    </ligand>
</feature>
<feature type="binding site" evidence="22 31 32">
    <location>
        <position position="151"/>
    </location>
    <ligand>
        <name>GTP</name>
        <dbReference type="ChEBI" id="CHEBI:37565"/>
    </ligand>
</feature>
<feature type="binding site" evidence="25 26 27">
    <location>
        <position position="175"/>
    </location>
    <ligand>
        <name>GDP</name>
        <dbReference type="ChEBI" id="CHEBI:58189"/>
    </ligand>
</feature>
<feature type="binding site" evidence="22 31 32">
    <location>
        <position position="175"/>
    </location>
    <ligand>
        <name>GTP</name>
        <dbReference type="ChEBI" id="CHEBI:37565"/>
    </ligand>
</feature>
<feature type="binding site" evidence="25 26 27 28 29 30">
    <location>
        <position position="176"/>
    </location>
    <ligand>
        <name>GDP</name>
        <dbReference type="ChEBI" id="CHEBI:58189"/>
    </ligand>
</feature>
<feature type="binding site" evidence="22 31 32">
    <location>
        <position position="176"/>
    </location>
    <ligand>
        <name>GTP</name>
        <dbReference type="ChEBI" id="CHEBI:37565"/>
    </ligand>
</feature>
<feature type="binding site" evidence="25 26 27">
    <location>
        <position position="177"/>
    </location>
    <ligand>
        <name>GDP</name>
        <dbReference type="ChEBI" id="CHEBI:58189"/>
    </ligand>
</feature>
<feature type="binding site" evidence="22 31 32">
    <location>
        <position position="177"/>
    </location>
    <ligand>
        <name>GTP</name>
        <dbReference type="ChEBI" id="CHEBI:37565"/>
    </ligand>
</feature>
<feature type="binding site" evidence="25 26 27 28">
    <location>
        <position position="178"/>
    </location>
    <ligand>
        <name>GDP</name>
        <dbReference type="ChEBI" id="CHEBI:58189"/>
    </ligand>
</feature>
<feature type="binding site" evidence="22 31 32">
    <location>
        <position position="178"/>
    </location>
    <ligand>
        <name>GTP</name>
        <dbReference type="ChEBI" id="CHEBI:37565"/>
    </ligand>
</feature>
<feature type="binding site" evidence="22 31 32">
    <location>
        <position position="179"/>
    </location>
    <ligand>
        <name>GTP</name>
        <dbReference type="ChEBI" id="CHEBI:37565"/>
    </ligand>
</feature>
<feature type="binding site" evidence="22 31 32">
    <location>
        <position position="180"/>
    </location>
    <ligand>
        <name>GTP</name>
        <dbReference type="ChEBI" id="CHEBI:37565"/>
    </ligand>
</feature>
<feature type="binding site" evidence="22 31 32">
    <location>
        <position position="181"/>
    </location>
    <ligand>
        <name>GTP</name>
        <dbReference type="ChEBI" id="CHEBI:37565"/>
    </ligand>
</feature>
<feature type="binding site" evidence="8 25 26 27">
    <location>
        <position position="181"/>
    </location>
    <ligand>
        <name>Mg(2+)</name>
        <dbReference type="ChEBI" id="CHEBI:18420"/>
    </ligand>
</feature>
<feature type="binding site" evidence="22 31 32">
    <location>
        <position position="201"/>
    </location>
    <ligand>
        <name>GTP</name>
        <dbReference type="ChEBI" id="CHEBI:37565"/>
    </ligand>
</feature>
<feature type="binding site" evidence="22 31 32">
    <location>
        <position position="203"/>
    </location>
    <ligand>
        <name>GTP</name>
        <dbReference type="ChEBI" id="CHEBI:37565"/>
    </ligand>
</feature>
<feature type="binding site" evidence="25 26 27 28 29 30">
    <location>
        <position position="269"/>
    </location>
    <ligand>
        <name>GDP</name>
        <dbReference type="ChEBI" id="CHEBI:58189"/>
    </ligand>
</feature>
<feature type="binding site" evidence="22 31 32">
    <location>
        <position position="269"/>
    </location>
    <ligand>
        <name>GTP</name>
        <dbReference type="ChEBI" id="CHEBI:37565"/>
    </ligand>
</feature>
<feature type="binding site" evidence="25 26 27 28 30">
    <location>
        <position position="270"/>
    </location>
    <ligand>
        <name>GDP</name>
        <dbReference type="ChEBI" id="CHEBI:58189"/>
    </ligand>
</feature>
<feature type="binding site" evidence="22 31 32">
    <location>
        <position position="270"/>
    </location>
    <ligand>
        <name>GTP</name>
        <dbReference type="ChEBI" id="CHEBI:37565"/>
    </ligand>
</feature>
<feature type="binding site" evidence="25 26 27 28 29 30">
    <location>
        <position position="272"/>
    </location>
    <ligand>
        <name>GDP</name>
        <dbReference type="ChEBI" id="CHEBI:58189"/>
    </ligand>
</feature>
<feature type="binding site" evidence="22 31 32">
    <location>
        <position position="272"/>
    </location>
    <ligand>
        <name>GTP</name>
        <dbReference type="ChEBI" id="CHEBI:37565"/>
    </ligand>
</feature>
<feature type="binding site" evidence="22 31 32">
    <location>
        <position position="273"/>
    </location>
    <ligand>
        <name>GTP</name>
        <dbReference type="ChEBI" id="CHEBI:37565"/>
    </ligand>
</feature>
<feature type="binding site" evidence="27 29">
    <location>
        <position position="325"/>
    </location>
    <ligand>
        <name>GDP</name>
        <dbReference type="ChEBI" id="CHEBI:58189"/>
    </ligand>
</feature>
<feature type="binding site" evidence="22 27 29">
    <location>
        <position position="325"/>
    </location>
    <ligand>
        <name>GTP</name>
        <dbReference type="ChEBI" id="CHEBI:37565"/>
    </ligand>
</feature>
<feature type="binding site" evidence="25 26 27 28 29 30">
    <location>
        <position position="326"/>
    </location>
    <ligand>
        <name>GDP</name>
        <dbReference type="ChEBI" id="CHEBI:58189"/>
    </ligand>
</feature>
<feature type="binding site" evidence="22 31 32">
    <location>
        <position position="326"/>
    </location>
    <ligand>
        <name>GTP</name>
        <dbReference type="ChEBI" id="CHEBI:37565"/>
    </ligand>
</feature>
<feature type="binding site" evidence="22 31 32">
    <location>
        <position position="327"/>
    </location>
    <ligand>
        <name>GTP</name>
        <dbReference type="ChEBI" id="CHEBI:37565"/>
    </ligand>
</feature>
<feature type="modified residue" description="ADP-ribosylarginine; by cholera toxin" evidence="1">
    <location>
        <position position="178"/>
    </location>
</feature>
<feature type="modified residue" description="Deamidated glutamine; by Photorhabdus PAU_02230" evidence="13">
    <location>
        <position position="204"/>
    </location>
</feature>
<feature type="modified residue" description="ADP-ribosylcysteine; by pertussis toxin" evidence="1">
    <location>
        <position position="351"/>
    </location>
</feature>
<feature type="lipid moiety-binding region" description="N-myristoyl glycine" evidence="15">
    <location>
        <position position="2"/>
    </location>
</feature>
<feature type="lipid moiety-binding region" description="S-palmitoyl cysteine" evidence="1">
    <location>
        <position position="3"/>
    </location>
</feature>
<feature type="sequence variant" id="VAR_068558" description="In ARCND1; likely pathogenic; dbSNP:rs387907178." evidence="10">
    <original>G</original>
    <variation>R</variation>
    <location>
        <position position="40"/>
    </location>
</feature>
<feature type="sequence variant" id="VAR_088775" description="In ARCND1; likely pathogenic." evidence="21">
    <original>G</original>
    <variation>S</variation>
    <location>
        <position position="45"/>
    </location>
</feature>
<feature type="sequence variant" id="VAR_088776" description="In ARCND1; likely pathogenic; dbSNP:rs1553223897." evidence="20 21">
    <original>S</original>
    <variation>N</variation>
    <location>
        <position position="47"/>
    </location>
</feature>
<feature type="sequence variant" id="VAR_088777" description="In ARCND1; likely pathogenic; dbSNP:rs397514768." evidence="12">
    <original>S</original>
    <variation>R</variation>
    <location>
        <position position="47"/>
    </location>
</feature>
<feature type="mutagenesis site" description="Decreased affinity for PLCD4." evidence="19">
    <original>K</original>
    <variation>A</variation>
    <location>
        <position position="35"/>
    </location>
</feature>
<feature type="mutagenesis site" description="Increased affinity for PLCD4." evidence="19">
    <original>L</original>
    <variation>A</variation>
    <location>
        <position position="36"/>
    </location>
</feature>
<feature type="mutagenesis site" description="No effect on binding to PLCD4." evidence="19">
    <original>L</original>
    <variation>A</variation>
    <location>
        <position position="37"/>
    </location>
</feature>
<feature type="mutagenesis site" description="Decreased affinity for PLCD4." evidence="19">
    <original>L</original>
    <variation>A</variation>
    <location>
        <position position="39"/>
    </location>
</feature>
<feature type="mutagenesis site" description="Decreased affinity for PLCD4." evidence="19">
    <original>G</original>
    <variation>R</variation>
    <location>
        <position position="42"/>
    </location>
</feature>
<feature type="mutagenesis site" description="No effect on binding to PLCD4." evidence="19">
    <original>I</original>
    <variation>A</variation>
    <location>
        <position position="184"/>
    </location>
</feature>
<feature type="mutagenesis site" description="Decreased affinity for CCDC88C and PLCD4." evidence="17 19">
    <original>W</original>
    <variation>A</variation>
    <location>
        <position position="211"/>
    </location>
</feature>
<feature type="mutagenesis site" description="Decreased affinity for CCDC88C and PLCD4." evidence="17 19">
    <original>F</original>
    <variation>A</variation>
    <location>
        <position position="215"/>
    </location>
</feature>
<feature type="mutagenesis site" description="No effect on binding to PLCD4." evidence="19">
    <original>V</original>
    <variation>A</variation>
    <location>
        <position position="218"/>
    </location>
</feature>
<feature type="mutagenesis site" description="No effect on binding to CCDC88C." evidence="17">
    <original>K</original>
    <variation>M</variation>
    <location>
        <position position="248"/>
    </location>
</feature>
<feature type="mutagenesis site" description="Decreased affinity for PLCD4." evidence="19">
    <original>L</original>
    <variation>H</variation>
    <location>
        <position position="249"/>
    </location>
</feature>
<feature type="mutagenesis site" description="No effect on binding to PLCD4." evidence="19">
    <original>L</original>
    <variation>V</variation>
    <location>
        <position position="249"/>
    </location>
</feature>
<feature type="mutagenesis site" description="Increased affinity for PLCD4." evidence="19">
    <original>S</original>
    <variation>A</variation>
    <location>
        <position position="252"/>
    </location>
</feature>
<feature type="mutagenesis site" description="Decreased affinity for PLCD4." evidence="19">
    <original>S</original>
    <variation>D</variation>
    <location>
        <position position="252"/>
    </location>
</feature>
<feature type="mutagenesis site" description="Decreased affinity for PLCD4." evidence="19">
    <original>N</original>
    <variation>A</variation>
    <location>
        <position position="256"/>
    </location>
</feature>
<feature type="mutagenesis site" description="Decreased affinity for PLCD4." evidence="19">
    <original>N</original>
    <variation>E</variation>
    <location>
        <position position="256"/>
    </location>
</feature>
<feature type="mutagenesis site" description="No effect on binding to PLCD4." evidence="19">
    <original>K</original>
    <variation>A</variation>
    <location>
        <position position="257"/>
    </location>
</feature>
<feature type="mutagenesis site" description="Increased affinity for PLCD4. No effect on binding to CCDC88C." evidence="17 19">
    <original>W</original>
    <variation>F</variation>
    <location>
        <position position="258"/>
    </location>
</feature>
<feature type="mutagenesis site" description="No effect on binding to PLCD4." evidence="19">
    <original>F</original>
    <variation>A</variation>
    <location>
        <position position="259"/>
    </location>
</feature>
<feature type="sequence conflict" description="In Ref. 11; no nucleotide entry." evidence="24" ref="11">
    <original>R</original>
    <variation>C</variation>
    <location>
        <position position="21"/>
    </location>
</feature>
<feature type="helix" evidence="34">
    <location>
        <begin position="7"/>
        <end position="31"/>
    </location>
</feature>
<feature type="strand" evidence="33">
    <location>
        <begin position="34"/>
        <end position="39"/>
    </location>
</feature>
<feature type="strand" evidence="34">
    <location>
        <begin position="42"/>
        <end position="45"/>
    </location>
</feature>
<feature type="helix" evidence="33">
    <location>
        <begin position="46"/>
        <end position="57"/>
    </location>
</feature>
<feature type="helix" evidence="33">
    <location>
        <begin position="63"/>
        <end position="68"/>
    </location>
</feature>
<feature type="helix" evidence="33">
    <location>
        <begin position="70"/>
        <end position="91"/>
    </location>
</feature>
<feature type="helix" evidence="33">
    <location>
        <begin position="100"/>
        <end position="110"/>
    </location>
</feature>
<feature type="turn" evidence="33">
    <location>
        <begin position="111"/>
        <end position="116"/>
    </location>
</feature>
<feature type="helix" evidence="33">
    <location>
        <begin position="121"/>
        <end position="131"/>
    </location>
</feature>
<feature type="helix" evidence="33">
    <location>
        <begin position="134"/>
        <end position="141"/>
    </location>
</feature>
<feature type="helix" evidence="33">
    <location>
        <begin position="142"/>
        <end position="145"/>
    </location>
</feature>
<feature type="helix" evidence="33">
    <location>
        <begin position="152"/>
        <end position="157"/>
    </location>
</feature>
<feature type="helix" evidence="33">
    <location>
        <begin position="159"/>
        <end position="162"/>
    </location>
</feature>
<feature type="helix" evidence="33">
    <location>
        <begin position="171"/>
        <end position="175"/>
    </location>
</feature>
<feature type="strand" evidence="33">
    <location>
        <begin position="183"/>
        <end position="191"/>
    </location>
</feature>
<feature type="strand" evidence="33">
    <location>
        <begin position="194"/>
        <end position="201"/>
    </location>
</feature>
<feature type="helix" evidence="33">
    <location>
        <begin position="205"/>
        <end position="214"/>
    </location>
</feature>
<feature type="strand" evidence="33">
    <location>
        <begin position="219"/>
        <end position="226"/>
    </location>
</feature>
<feature type="helix" evidence="33">
    <location>
        <begin position="227"/>
        <end position="231"/>
    </location>
</feature>
<feature type="strand" evidence="33">
    <location>
        <begin position="237"/>
        <end position="241"/>
    </location>
</feature>
<feature type="helix" evidence="33">
    <location>
        <begin position="242"/>
        <end position="254"/>
    </location>
</feature>
<feature type="helix" evidence="33">
    <location>
        <begin position="257"/>
        <end position="259"/>
    </location>
</feature>
<feature type="strand" evidence="33">
    <location>
        <begin position="262"/>
        <end position="269"/>
    </location>
</feature>
<feature type="helix" evidence="33">
    <location>
        <begin position="271"/>
        <end position="278"/>
    </location>
</feature>
<feature type="strand" evidence="35">
    <location>
        <begin position="279"/>
        <end position="281"/>
    </location>
</feature>
<feature type="helix" evidence="33">
    <location>
        <begin position="283"/>
        <end position="285"/>
    </location>
</feature>
<feature type="strand" evidence="36">
    <location>
        <begin position="287"/>
        <end position="289"/>
    </location>
</feature>
<feature type="strand" evidence="36">
    <location>
        <begin position="292"/>
        <end position="294"/>
    </location>
</feature>
<feature type="helix" evidence="33">
    <location>
        <begin position="296"/>
        <end position="308"/>
    </location>
</feature>
<feature type="turn" evidence="33">
    <location>
        <begin position="314"/>
        <end position="316"/>
    </location>
</feature>
<feature type="strand" evidence="33">
    <location>
        <begin position="319"/>
        <end position="323"/>
    </location>
</feature>
<feature type="helix" evidence="33">
    <location>
        <begin position="329"/>
        <end position="346"/>
    </location>
</feature>
<feature type="helix" evidence="35">
    <location>
        <begin position="350"/>
        <end position="352"/>
    </location>
</feature>
<comment type="function">
    <text evidence="2 5 6 16 22 23">Heterotrimeric guanine nucleotide-binding proteins (G proteins) function as transducers downstream of G protein-coupled receptors (GPCRs) in numerous signaling cascades. The alpha chain contains the guanine nucleotide binding site and alternates between an active, GTP-bound state and an inactive, GDP-bound state. Signaling by an activated GPCR promotes GDP release and GTP binding. The alpha subunit has a low GTPase activity that converts bound GTP to GDP, thereby terminating the signal (By similarity). Both GDP release and GTP hydrolysis are modulated by numerous regulatory proteins (PubMed:18434541, PubMed:19478087, PubMed:8774883). Signaling is mediated via effector proteins, such as adenylate cyclase. Inhibits adenylate cyclase activity, leading to decreased intracellular cAMP levels (PubMed:19478087). Stimulates the activity of receptor-regulated K(+) channels (PubMed:2535845). The active GTP-bound form prevents the association of RGS14 with centrosomes and is required for the translocation of RGS14 from the cytoplasm to the plasma membrane. May play a role in cell division (PubMed:17635935). The active GTP-bound form activates the calcium permeant TRPC5 ion channels (PubMed:37137991).</text>
</comment>
<comment type="subunit">
    <text evidence="2 3 6 7 8 9 11 14 17 19 22 24">Heterotrimeric G proteins are composed of 3 units; alpha, beta and gamma. The alpha subunit contains the guanine nucleotide binding site (By similarity). GTP binding causes dissociation of the heterotrimer, liberating the individual subunits so that they can interact with downstream effector proteins. Forms a complex with CCDC88A/GIV and EGFR which leads to enhanced EGFR signaling and triggering of cell migration; ligand stimulation is required for recruitment of GNAI3 to the complex (PubMed:20462955). Interacts (inactive GDP-bound form) with CCDC88A/GIV (via GBA motif); the interaction leads to activation of GNAI3 (PubMed:19211784, PubMed:20462955). Interacts (inactive GDP-bound form) with CCDC88C/DAPLE (via GBA motif); the interaction leads to activation of GNAI3 (PubMed:26126266). Interacts (inactive GDP-bound form) with NUCB1 (via GBA motif) and NUCB2 (via GBA motif); the interaction leads to activation of GNAI3 (By similarity). Interacts (inactive GDP-bound form) with PLCD4 (via GBA motif); the interaction leads to activation of GNAI3 (PubMed:30194280). Interacts with INSR; the interaction is probably mediated by CCDC88A/GIV (PubMed:25187647). Interacts with GPSM1 (By similarity). Interacts (GDP-bound form) with GPSM2 (via GoLoco domains) (PubMed:22952234). Does not interact with RGS2 (PubMed:19478087). Interacts with RGS8 and RGS10; this strongly enhances the intrinsic GTPase activity (PubMed:18434541, PubMed:8774883). Interacts with RGS16; this strongly enhances the intrinsic GTPase activity (PubMed:19478087). Interacts with RGS12 (By similarity). Interacts (via active GTP- or inactive GDP-bound form) with RGS14 (By similarity). Interacts (via active GTP-bound form) with TRPC5 (via ANK repeats) in a homotetrameric ion channel; the interaction is direct and activates the channel activity (PubMed:37137991).</text>
</comment>
<comment type="interaction">
    <interactant intactId="EBI-357563">
        <id>P08754</id>
    </interactant>
    <interactant intactId="EBI-618655">
        <id>P81274</id>
        <label>GPSM2</label>
    </interactant>
    <organismsDiffer>false</organismsDiffer>
    <experiments>3</experiments>
</comment>
<comment type="interaction">
    <interactant intactId="EBI-357563">
        <id>P08754</id>
    </interactant>
    <interactant intactId="EBI-347538">
        <id>Q9Y4H4</id>
        <label>GPSM3</label>
    </interactant>
    <organismsDiffer>false</organismsDiffer>
    <experiments>8</experiments>
</comment>
<comment type="interaction">
    <interactant intactId="EBI-357563">
        <id>P08754</id>
    </interactant>
    <interactant intactId="EBI-12250122">
        <id>Q8IVA1</id>
        <label>PCP2</label>
    </interactant>
    <organismsDiffer>false</organismsDiffer>
    <experiments>9</experiments>
</comment>
<comment type="interaction">
    <interactant intactId="EBI-357563">
        <id>P08754</id>
    </interactant>
    <interactant intactId="EBI-17717171">
        <id>Q9UPV7</id>
        <label>PHF24</label>
    </interactant>
    <organismsDiffer>false</organismsDiffer>
    <experiments>3</experiments>
</comment>
<comment type="interaction">
    <interactant intactId="EBI-357563">
        <id>P08754</id>
    </interactant>
    <interactant intactId="EBI-750603">
        <id>O43566</id>
        <label>RGS14</label>
    </interactant>
    <organismsDiffer>false</organismsDiffer>
    <experiments>5</experiments>
</comment>
<comment type="interaction">
    <interactant intactId="EBI-357563">
        <id>P08754</id>
    </interactant>
    <interactant intactId="EBI-3918154">
        <id>Q9UGC6</id>
        <label>RGS17</label>
    </interactant>
    <organismsDiffer>false</organismsDiffer>
    <experiments>3</experiments>
</comment>
<comment type="subcellular location">
    <subcellularLocation>
        <location evidence="5">Cytoplasm</location>
    </subcellularLocation>
    <subcellularLocation>
        <location evidence="5 18">Cell membrane</location>
        <topology evidence="24">Lipid-anchor</topology>
    </subcellularLocation>
    <subcellularLocation>
        <location evidence="5">Cytoplasm</location>
        <location evidence="5">Cytoskeleton</location>
        <location evidence="5">Microtubule organizing center</location>
        <location evidence="5">Centrosome</location>
    </subcellularLocation>
    <text evidence="5">Localizes in the centrosomes of interphase and mitotic cells. Detected at the cleavage furrow and/or the midbody.</text>
</comment>
<comment type="PTM">
    <text evidence="13">(Microbial infection) Deamidated at Gln-204 by Photorhabdus asymbiotica toxin PAU_02230, blocking GTP hydrolysis of heterotrimeric GNAQ or GNA11 and G-alphai (GNAI1, GNAI2 or GNAI3) proteins, thereby activating RhoA.</text>
</comment>
<comment type="disease" evidence="10 12 20 21">
    <disease id="DI-03467">
        <name>Auriculocondylar syndrome 1</name>
        <acronym>ARCND1</acronym>
        <description>An autosomal dominant form of auriculocondylar syndrome, a craniofacial malformation syndrome characterized by variable mandibular anomalies, including mild to severe micrognathia, temporomandibular joint ankylosis, cleft palate, and a characteristic ear malformation that consists of separation of the lobule from the external ear, giving the appearance of a question mark (question-mark ear). Other frequently described features include prominent cheeks, cupped and posteriorly rotated ears, preauricular tags, and microstomia. Glossoptosis, masticatory abnormalities, orthodontic problems, and malocclusion occur in a majority of affected subjects.</description>
        <dbReference type="MIM" id="602483"/>
    </disease>
    <text>The disease is caused by variants affecting the gene represented in this entry.</text>
</comment>
<comment type="similarity">
    <text evidence="24">Belongs to the G-alpha family. G(i/o/t/z) subfamily.</text>
</comment>
<sequence length="354" mass="40532">MGCTLSAEDKAAVERSKMIDRNLREDGEKAAKEVKLLLLGAGESGKSTIVKQMKIIHEDGYSEDECKQYKVVVYSNTIQSIIAIIRAMGRLKIDFGEAARADDARQLFVLAGSAEEGVMTPELAGVIKRLWRDGGVQACFSRSREYQLNDSASYYLNDLDRISQSNYIPTQQDVLRTRVKTTGIVETHFTFKDLYFKMFDVGGQRSERKKWIHCFEGVTAIIFCVALSDYDLVLAEDEEMNRMHESMKLFDSICNNKWFTETSIILFLNKKDLFEEKIKRSPLTICYPEYTGSNTYEEAAAYIQCQFEDLNRRKDTKEIYTHFTCATDTKNVQFVFDAVTDVIIKNNLKECGLY</sequence>
<protein>
    <recommendedName>
        <fullName>Guanine nucleotide-binding protein G(i) subunit alpha-3</fullName>
    </recommendedName>
    <alternativeName>
        <fullName>G(i) alpha-3</fullName>
    </alternativeName>
</protein>
<dbReference type="EMBL" id="M27543">
    <property type="protein sequence ID" value="AAA52579.1"/>
    <property type="molecule type" value="mRNA"/>
</dbReference>
<dbReference type="EMBL" id="J03005">
    <property type="protein sequence ID" value="AAA52557.1"/>
    <property type="molecule type" value="mRNA"/>
</dbReference>
<dbReference type="EMBL" id="M20604">
    <property type="protein sequence ID" value="AAA35895.1"/>
    <property type="molecule type" value="Genomic_DNA"/>
</dbReference>
<dbReference type="EMBL" id="M20597">
    <property type="protein sequence ID" value="AAA35895.1"/>
    <property type="status" value="JOINED"/>
    <property type="molecule type" value="Genomic_DNA"/>
</dbReference>
<dbReference type="EMBL" id="M20598">
    <property type="protein sequence ID" value="AAA35895.1"/>
    <property type="status" value="JOINED"/>
    <property type="molecule type" value="Genomic_DNA"/>
</dbReference>
<dbReference type="EMBL" id="M20599">
    <property type="protein sequence ID" value="AAA35895.1"/>
    <property type="status" value="JOINED"/>
    <property type="molecule type" value="Genomic_DNA"/>
</dbReference>
<dbReference type="EMBL" id="M20600">
    <property type="protein sequence ID" value="AAA35895.1"/>
    <property type="status" value="JOINED"/>
    <property type="molecule type" value="Genomic_DNA"/>
</dbReference>
<dbReference type="EMBL" id="M20601">
    <property type="protein sequence ID" value="AAA35895.1"/>
    <property type="status" value="JOINED"/>
    <property type="molecule type" value="Genomic_DNA"/>
</dbReference>
<dbReference type="EMBL" id="M20602">
    <property type="protein sequence ID" value="AAA35895.1"/>
    <property type="status" value="JOINED"/>
    <property type="molecule type" value="Genomic_DNA"/>
</dbReference>
<dbReference type="EMBL" id="M20603">
    <property type="protein sequence ID" value="AAA35895.1"/>
    <property type="status" value="JOINED"/>
    <property type="molecule type" value="Genomic_DNA"/>
</dbReference>
<dbReference type="EMBL" id="J03198">
    <property type="protein sequence ID" value="AAA35896.1"/>
    <property type="molecule type" value="mRNA"/>
</dbReference>
<dbReference type="EMBL" id="J03238">
    <property type="protein sequence ID" value="AAA35939.1"/>
    <property type="molecule type" value="mRNA"/>
</dbReference>
<dbReference type="EMBL" id="AF493907">
    <property type="protein sequence ID" value="AAM12621.1"/>
    <property type="molecule type" value="mRNA"/>
</dbReference>
<dbReference type="EMBL" id="BT019973">
    <property type="protein sequence ID" value="AAV38776.1"/>
    <property type="molecule type" value="mRNA"/>
</dbReference>
<dbReference type="EMBL" id="BT019974">
    <property type="protein sequence ID" value="AAV38777.1"/>
    <property type="molecule type" value="mRNA"/>
</dbReference>
<dbReference type="EMBL" id="AK312252">
    <property type="protein sequence ID" value="BAG35184.1"/>
    <property type="molecule type" value="mRNA"/>
</dbReference>
<dbReference type="EMBL" id="CH471122">
    <property type="protein sequence ID" value="EAW56393.1"/>
    <property type="molecule type" value="Genomic_DNA"/>
</dbReference>
<dbReference type="EMBL" id="BC025285">
    <property type="protein sequence ID" value="AAH25285.1"/>
    <property type="molecule type" value="mRNA"/>
</dbReference>
<dbReference type="CCDS" id="CCDS802.1"/>
<dbReference type="PIR" id="S02348">
    <property type="entry name" value="RGHUI3"/>
</dbReference>
<dbReference type="RefSeq" id="NP_006487.1">
    <property type="nucleotide sequence ID" value="NM_006496.4"/>
</dbReference>
<dbReference type="PDB" id="2IHB">
    <property type="method" value="X-ray"/>
    <property type="resolution" value="2.71 A"/>
    <property type="chains" value="A=32-354"/>
</dbReference>
<dbReference type="PDB" id="2ODE">
    <property type="method" value="X-ray"/>
    <property type="resolution" value="1.90 A"/>
    <property type="chains" value="A/C=4-350"/>
</dbReference>
<dbReference type="PDB" id="2V4Z">
    <property type="method" value="X-ray"/>
    <property type="resolution" value="2.80 A"/>
    <property type="chains" value="A=4-350"/>
</dbReference>
<dbReference type="PDB" id="4G5O">
    <property type="method" value="X-ray"/>
    <property type="resolution" value="2.90 A"/>
    <property type="chains" value="A/B/C/D=25-354"/>
</dbReference>
<dbReference type="PDB" id="4G5R">
    <property type="method" value="X-ray"/>
    <property type="resolution" value="3.48 A"/>
    <property type="chains" value="A/B/C/D=25-354"/>
</dbReference>
<dbReference type="PDB" id="4G5S">
    <property type="method" value="X-ray"/>
    <property type="resolution" value="3.62 A"/>
    <property type="chains" value="A/B/C/D=25-354"/>
</dbReference>
<dbReference type="PDB" id="7E9H">
    <property type="method" value="EM"/>
    <property type="resolution" value="4.00 A"/>
    <property type="chains" value="A=1-354"/>
</dbReference>
<dbReference type="PDB" id="7KH0">
    <property type="method" value="EM"/>
    <property type="resolution" value="2.80 A"/>
    <property type="chains" value="A=2-19"/>
</dbReference>
<dbReference type="PDB" id="7RA3">
    <property type="method" value="EM"/>
    <property type="resolution" value="3.24 A"/>
    <property type="chains" value="A=1-19"/>
</dbReference>
<dbReference type="PDB" id="7RGP">
    <property type="method" value="EM"/>
    <property type="resolution" value="2.90 A"/>
    <property type="chains" value="A=4-19"/>
</dbReference>
<dbReference type="PDB" id="7T10">
    <property type="method" value="EM"/>
    <property type="resolution" value="2.50 A"/>
    <property type="chains" value="A=1-354"/>
</dbReference>
<dbReference type="PDB" id="7T11">
    <property type="method" value="EM"/>
    <property type="resolution" value="2.70 A"/>
    <property type="chains" value="A=1-354"/>
</dbReference>
<dbReference type="PDB" id="7X6I">
    <property type="method" value="EM"/>
    <property type="resolution" value="3.93 A"/>
    <property type="chains" value="E/F/G/H=1-354"/>
</dbReference>
<dbReference type="PDB" id="8GVX">
    <property type="method" value="EM"/>
    <property type="resolution" value="3.91 A"/>
    <property type="chains" value="E/F/G/H=1-354"/>
</dbReference>
<dbReference type="PDB" id="8JD6">
    <property type="method" value="EM"/>
    <property type="resolution" value="3.40 A"/>
    <property type="chains" value="A=1-354"/>
</dbReference>
<dbReference type="PDB" id="8K9L">
    <property type="method" value="EM"/>
    <property type="resolution" value="3.05 A"/>
    <property type="chains" value="A=1-354"/>
</dbReference>
<dbReference type="PDB" id="8OY1">
    <property type="method" value="X-ray"/>
    <property type="resolution" value="3.34 A"/>
    <property type="chains" value="A=31-350"/>
</dbReference>
<dbReference type="PDB" id="8SZH">
    <property type="method" value="EM"/>
    <property type="resolution" value="3.10 A"/>
    <property type="chains" value="C=1-354"/>
</dbReference>
<dbReference type="PDB" id="8SZI">
    <property type="method" value="EM"/>
    <property type="resolution" value="3.50 A"/>
    <property type="chains" value="C=1-354"/>
</dbReference>
<dbReference type="PDB" id="8WGB">
    <property type="method" value="EM"/>
    <property type="resolution" value="3.70 A"/>
    <property type="chains" value="C=1-354"/>
</dbReference>
<dbReference type="PDB" id="9AVL">
    <property type="method" value="EM"/>
    <property type="resolution" value="3.80 A"/>
    <property type="chains" value="A=1-354"/>
</dbReference>
<dbReference type="PDBsum" id="2IHB"/>
<dbReference type="PDBsum" id="2ODE"/>
<dbReference type="PDBsum" id="2V4Z"/>
<dbReference type="PDBsum" id="4G5O"/>
<dbReference type="PDBsum" id="4G5R"/>
<dbReference type="PDBsum" id="4G5S"/>
<dbReference type="PDBsum" id="7E9H"/>
<dbReference type="PDBsum" id="7KH0"/>
<dbReference type="PDBsum" id="7RA3"/>
<dbReference type="PDBsum" id="7RGP"/>
<dbReference type="PDBsum" id="7T10"/>
<dbReference type="PDBsum" id="7T11"/>
<dbReference type="PDBsum" id="7X6I"/>
<dbReference type="PDBsum" id="8GVX"/>
<dbReference type="PDBsum" id="8JD6"/>
<dbReference type="PDBsum" id="8K9L"/>
<dbReference type="PDBsum" id="8OY1"/>
<dbReference type="PDBsum" id="8SZH"/>
<dbReference type="PDBsum" id="8SZI"/>
<dbReference type="PDBsum" id="8WGB"/>
<dbReference type="PDBsum" id="9AVL"/>
<dbReference type="BMRB" id="P08754"/>
<dbReference type="EMDB" id="EMD-24453"/>
<dbReference type="EMDB" id="EMD-25586"/>
<dbReference type="EMDB" id="EMD-25587"/>
<dbReference type="EMDB" id="EMD-31032"/>
<dbReference type="EMDB" id="EMD-33022"/>
<dbReference type="EMDB" id="EMD-34301"/>
<dbReference type="EMDB" id="EMD-36177"/>
<dbReference type="EMDB" id="EMD-37507"/>
<dbReference type="EMDB" id="EMD-39356"/>
<dbReference type="EMDB" id="EMD-40916"/>
<dbReference type="EMDB" id="EMD-40917"/>
<dbReference type="EMDB" id="EMD-43908"/>
<dbReference type="SMR" id="P08754"/>
<dbReference type="BioGRID" id="109035">
    <property type="interactions" value="233"/>
</dbReference>
<dbReference type="CORUM" id="P08754"/>
<dbReference type="FunCoup" id="P08754">
    <property type="interactions" value="4620"/>
</dbReference>
<dbReference type="IntAct" id="P08754">
    <property type="interactions" value="97"/>
</dbReference>
<dbReference type="MINT" id="P08754"/>
<dbReference type="STRING" id="9606.ENSP00000358867"/>
<dbReference type="BindingDB" id="P08754"/>
<dbReference type="ChEMBL" id="CHEMBL4221"/>
<dbReference type="GlyCosmos" id="P08754">
    <property type="glycosylation" value="3 sites, 1 glycan"/>
</dbReference>
<dbReference type="GlyGen" id="P08754">
    <property type="glycosylation" value="4 sites, 1 O-linked glycan (4 sites)"/>
</dbReference>
<dbReference type="iPTMnet" id="P08754"/>
<dbReference type="PhosphoSitePlus" id="P08754"/>
<dbReference type="SwissPalm" id="P08754"/>
<dbReference type="BioMuta" id="GNAI3"/>
<dbReference type="DMDM" id="120996"/>
<dbReference type="CPTAC" id="CPTAC-1245"/>
<dbReference type="CPTAC" id="CPTAC-1246"/>
<dbReference type="jPOST" id="P08754"/>
<dbReference type="MassIVE" id="P08754"/>
<dbReference type="PaxDb" id="9606-ENSP00000358867"/>
<dbReference type="PeptideAtlas" id="P08754"/>
<dbReference type="PRIDE" id="P08754"/>
<dbReference type="ProteomicsDB" id="52164"/>
<dbReference type="Pumba" id="P08754"/>
<dbReference type="Antibodypedia" id="20068">
    <property type="antibodies" value="235 antibodies from 33 providers"/>
</dbReference>
<dbReference type="DNASU" id="2773"/>
<dbReference type="Ensembl" id="ENST00000369851.7">
    <property type="protein sequence ID" value="ENSP00000358867.4"/>
    <property type="gene ID" value="ENSG00000065135.12"/>
</dbReference>
<dbReference type="GeneID" id="2773"/>
<dbReference type="KEGG" id="hsa:2773"/>
<dbReference type="MANE-Select" id="ENST00000369851.7">
    <property type="protein sequence ID" value="ENSP00000358867.4"/>
    <property type="RefSeq nucleotide sequence ID" value="NM_006496.4"/>
    <property type="RefSeq protein sequence ID" value="NP_006487.1"/>
</dbReference>
<dbReference type="UCSC" id="uc001dxz.4">
    <property type="organism name" value="human"/>
</dbReference>
<dbReference type="AGR" id="HGNC:4387"/>
<dbReference type="CTD" id="2773"/>
<dbReference type="DisGeNET" id="2773"/>
<dbReference type="GeneCards" id="GNAI3"/>
<dbReference type="HGNC" id="HGNC:4387">
    <property type="gene designation" value="GNAI3"/>
</dbReference>
<dbReference type="HPA" id="ENSG00000065135">
    <property type="expression patterns" value="Low tissue specificity"/>
</dbReference>
<dbReference type="MalaCards" id="GNAI3"/>
<dbReference type="MIM" id="139370">
    <property type="type" value="gene"/>
</dbReference>
<dbReference type="MIM" id="602483">
    <property type="type" value="phenotype"/>
</dbReference>
<dbReference type="neXtProt" id="NX_P08754"/>
<dbReference type="OpenTargets" id="ENSG00000065135"/>
<dbReference type="Orphanet" id="137888">
    <property type="disease" value="Auriculocondylar syndrome"/>
</dbReference>
<dbReference type="PharmGKB" id="PA173"/>
<dbReference type="VEuPathDB" id="HostDB:ENSG00000065135"/>
<dbReference type="eggNOG" id="KOG0082">
    <property type="taxonomic scope" value="Eukaryota"/>
</dbReference>
<dbReference type="GeneTree" id="ENSGT00940000153567"/>
<dbReference type="HOGENOM" id="CLU_014184_6_0_1"/>
<dbReference type="InParanoid" id="P08754"/>
<dbReference type="OMA" id="ICYPEYC"/>
<dbReference type="OrthoDB" id="5817230at2759"/>
<dbReference type="PAN-GO" id="P08754">
    <property type="GO annotations" value="5 GO annotations based on evolutionary models"/>
</dbReference>
<dbReference type="PhylomeDB" id="P08754"/>
<dbReference type="TreeFam" id="TF300673"/>
<dbReference type="PathwayCommons" id="P08754"/>
<dbReference type="Reactome" id="R-HSA-170670">
    <property type="pathway name" value="Adenylate cyclase inhibitory pathway"/>
</dbReference>
<dbReference type="Reactome" id="R-HSA-392170">
    <property type="pathway name" value="ADP signalling through P2Y purinoceptor 12"/>
</dbReference>
<dbReference type="Reactome" id="R-HSA-418555">
    <property type="pathway name" value="G alpha (s) signalling events"/>
</dbReference>
<dbReference type="Reactome" id="R-HSA-418594">
    <property type="pathway name" value="G alpha (i) signalling events"/>
</dbReference>
<dbReference type="Reactome" id="R-HSA-418597">
    <property type="pathway name" value="G alpha (z) signalling events"/>
</dbReference>
<dbReference type="Reactome" id="R-HSA-9009391">
    <property type="pathway name" value="Extra-nuclear estrogen signaling"/>
</dbReference>
<dbReference type="Reactome" id="R-HSA-9634597">
    <property type="pathway name" value="GPER1 signaling"/>
</dbReference>
<dbReference type="Reactome" id="R-HSA-9660821">
    <property type="pathway name" value="ADORA2B mediated anti-inflammatory cytokines production"/>
</dbReference>
<dbReference type="SignaLink" id="P08754"/>
<dbReference type="SIGNOR" id="P08754"/>
<dbReference type="BioGRID-ORCS" id="2773">
    <property type="hits" value="14 hits in 1155 CRISPR screens"/>
</dbReference>
<dbReference type="CD-CODE" id="8C2F96ED">
    <property type="entry name" value="Centrosome"/>
</dbReference>
<dbReference type="CD-CODE" id="FB4E32DD">
    <property type="entry name" value="Presynaptic clusters and postsynaptic densities"/>
</dbReference>
<dbReference type="ChiTaRS" id="GNAI3">
    <property type="organism name" value="human"/>
</dbReference>
<dbReference type="EvolutionaryTrace" id="P08754"/>
<dbReference type="GeneWiki" id="GNAI3"/>
<dbReference type="GenomeRNAi" id="2773"/>
<dbReference type="Pharos" id="P08754">
    <property type="development level" value="Tbio"/>
</dbReference>
<dbReference type="PRO" id="PR:P08754"/>
<dbReference type="Proteomes" id="UP000005640">
    <property type="component" value="Chromosome 1"/>
</dbReference>
<dbReference type="RNAct" id="P08754">
    <property type="molecule type" value="protein"/>
</dbReference>
<dbReference type="Bgee" id="ENSG00000065135">
    <property type="expression patterns" value="Expressed in esophagus squamous epithelium and 209 other cell types or tissues"/>
</dbReference>
<dbReference type="GO" id="GO:0034451">
    <property type="term" value="C:centriolar satellite"/>
    <property type="evidence" value="ECO:0000314"/>
    <property type="project" value="HPA"/>
</dbReference>
<dbReference type="GO" id="GO:0005813">
    <property type="term" value="C:centrosome"/>
    <property type="evidence" value="ECO:0000314"/>
    <property type="project" value="UniProtKB"/>
</dbReference>
<dbReference type="GO" id="GO:0036064">
    <property type="term" value="C:ciliary basal body"/>
    <property type="evidence" value="ECO:0000314"/>
    <property type="project" value="HPA"/>
</dbReference>
<dbReference type="GO" id="GO:0005737">
    <property type="term" value="C:cytoplasm"/>
    <property type="evidence" value="ECO:0000314"/>
    <property type="project" value="UniProtKB"/>
</dbReference>
<dbReference type="GO" id="GO:0005829">
    <property type="term" value="C:cytosol"/>
    <property type="evidence" value="ECO:0000314"/>
    <property type="project" value="HPA"/>
</dbReference>
<dbReference type="GO" id="GO:0070062">
    <property type="term" value="C:extracellular exosome"/>
    <property type="evidence" value="ECO:0007005"/>
    <property type="project" value="UniProtKB"/>
</dbReference>
<dbReference type="GO" id="GO:0005794">
    <property type="term" value="C:Golgi apparatus"/>
    <property type="evidence" value="ECO:0000314"/>
    <property type="project" value="HPA"/>
</dbReference>
<dbReference type="GO" id="GO:0005834">
    <property type="term" value="C:heterotrimeric G-protein complex"/>
    <property type="evidence" value="ECO:0000318"/>
    <property type="project" value="GO_Central"/>
</dbReference>
<dbReference type="GO" id="GO:0005765">
    <property type="term" value="C:lysosomal membrane"/>
    <property type="evidence" value="ECO:0007005"/>
    <property type="project" value="UniProtKB"/>
</dbReference>
<dbReference type="GO" id="GO:0016020">
    <property type="term" value="C:membrane"/>
    <property type="evidence" value="ECO:0007005"/>
    <property type="project" value="UniProtKB"/>
</dbReference>
<dbReference type="GO" id="GO:0030496">
    <property type="term" value="C:midbody"/>
    <property type="evidence" value="ECO:0000314"/>
    <property type="project" value="UniProtKB"/>
</dbReference>
<dbReference type="GO" id="GO:0005730">
    <property type="term" value="C:nucleolus"/>
    <property type="evidence" value="ECO:0000314"/>
    <property type="project" value="HPA"/>
</dbReference>
<dbReference type="GO" id="GO:0005654">
    <property type="term" value="C:nucleoplasm"/>
    <property type="evidence" value="ECO:0000314"/>
    <property type="project" value="HPA"/>
</dbReference>
<dbReference type="GO" id="GO:0005886">
    <property type="term" value="C:plasma membrane"/>
    <property type="evidence" value="ECO:0000314"/>
    <property type="project" value="UniProtKB"/>
</dbReference>
<dbReference type="GO" id="GO:0001664">
    <property type="term" value="F:G protein-coupled receptor binding"/>
    <property type="evidence" value="ECO:0000318"/>
    <property type="project" value="GO_Central"/>
</dbReference>
<dbReference type="GO" id="GO:0031683">
    <property type="term" value="F:G-protein beta/gamma-subunit complex binding"/>
    <property type="evidence" value="ECO:0000318"/>
    <property type="project" value="GO_Central"/>
</dbReference>
<dbReference type="GO" id="GO:0019003">
    <property type="term" value="F:GDP binding"/>
    <property type="evidence" value="ECO:0000314"/>
    <property type="project" value="UniProtKB"/>
</dbReference>
<dbReference type="GO" id="GO:0005525">
    <property type="term" value="F:GTP binding"/>
    <property type="evidence" value="ECO:0007669"/>
    <property type="project" value="UniProtKB-KW"/>
</dbReference>
<dbReference type="GO" id="GO:0003924">
    <property type="term" value="F:GTPase activity"/>
    <property type="evidence" value="ECO:0000314"/>
    <property type="project" value="UniProtKB"/>
</dbReference>
<dbReference type="GO" id="GO:0046872">
    <property type="term" value="F:metal ion binding"/>
    <property type="evidence" value="ECO:0007669"/>
    <property type="project" value="UniProtKB-KW"/>
</dbReference>
<dbReference type="GO" id="GO:0007193">
    <property type="term" value="P:adenylate cyclase-inhibiting G protein-coupled receptor signaling pathway"/>
    <property type="evidence" value="ECO:0000314"/>
    <property type="project" value="UniProtKB"/>
</dbReference>
<dbReference type="GO" id="GO:0007188">
    <property type="term" value="P:adenylate cyclase-modulating G protein-coupled receptor signaling pathway"/>
    <property type="evidence" value="ECO:0000318"/>
    <property type="project" value="GO_Central"/>
</dbReference>
<dbReference type="GO" id="GO:0051301">
    <property type="term" value="P:cell division"/>
    <property type="evidence" value="ECO:0000314"/>
    <property type="project" value="UniProtKB"/>
</dbReference>
<dbReference type="GO" id="GO:0046039">
    <property type="term" value="P:GTP metabolic process"/>
    <property type="evidence" value="ECO:0000314"/>
    <property type="project" value="UniProtKB"/>
</dbReference>
<dbReference type="GO" id="GO:0007194">
    <property type="term" value="P:negative regulation of adenylate cyclase activity"/>
    <property type="evidence" value="ECO:0000304"/>
    <property type="project" value="ProtInc"/>
</dbReference>
<dbReference type="GO" id="GO:0016239">
    <property type="term" value="P:positive regulation of macroautophagy"/>
    <property type="evidence" value="ECO:0000315"/>
    <property type="project" value="UniProtKB"/>
</dbReference>
<dbReference type="CDD" id="cd00066">
    <property type="entry name" value="G-alpha"/>
    <property type="match status" value="1"/>
</dbReference>
<dbReference type="FunFam" id="1.10.400.10:FF:000001">
    <property type="entry name" value="Guanine nucleotide-binding protein G(I) subunit alpha"/>
    <property type="match status" value="1"/>
</dbReference>
<dbReference type="FunFam" id="3.40.50.300:FF:002487">
    <property type="entry name" value="Guanine nucleotide-binding protein G(i) subunit alpha-1"/>
    <property type="match status" value="1"/>
</dbReference>
<dbReference type="FunFam" id="3.40.50.300:FF:003559">
    <property type="entry name" value="Guanine nucleotide-binding protein G(i) subunit alpha-1"/>
    <property type="match status" value="1"/>
</dbReference>
<dbReference type="Gene3D" id="1.10.400.10">
    <property type="entry name" value="GI Alpha 1, domain 2-like"/>
    <property type="match status" value="1"/>
</dbReference>
<dbReference type="Gene3D" id="3.40.50.300">
    <property type="entry name" value="P-loop containing nucleotide triphosphate hydrolases"/>
    <property type="match status" value="1"/>
</dbReference>
<dbReference type="InterPro" id="IPR001408">
    <property type="entry name" value="Gprotein_alpha_I"/>
</dbReference>
<dbReference type="InterPro" id="IPR001019">
    <property type="entry name" value="Gprotein_alpha_su"/>
</dbReference>
<dbReference type="InterPro" id="IPR011025">
    <property type="entry name" value="GproteinA_insert"/>
</dbReference>
<dbReference type="InterPro" id="IPR027417">
    <property type="entry name" value="P-loop_NTPase"/>
</dbReference>
<dbReference type="PANTHER" id="PTHR10218">
    <property type="entry name" value="GTP-BINDING PROTEIN ALPHA SUBUNIT"/>
    <property type="match status" value="1"/>
</dbReference>
<dbReference type="PANTHER" id="PTHR10218:SF230">
    <property type="entry name" value="GUANINE NUCLEOTIDE-BINDING PROTEIN G(I) SUBUNIT ALPHA-3"/>
    <property type="match status" value="1"/>
</dbReference>
<dbReference type="Pfam" id="PF00503">
    <property type="entry name" value="G-alpha"/>
    <property type="match status" value="1"/>
</dbReference>
<dbReference type="PRINTS" id="PR00318">
    <property type="entry name" value="GPROTEINA"/>
</dbReference>
<dbReference type="PRINTS" id="PR00441">
    <property type="entry name" value="GPROTEINAI"/>
</dbReference>
<dbReference type="SMART" id="SM00275">
    <property type="entry name" value="G_alpha"/>
    <property type="match status" value="1"/>
</dbReference>
<dbReference type="SUPFAM" id="SSF52540">
    <property type="entry name" value="P-loop containing nucleoside triphosphate hydrolases"/>
    <property type="match status" value="1"/>
</dbReference>
<dbReference type="SUPFAM" id="SSF47895">
    <property type="entry name" value="Transducin (alpha subunit), insertion domain"/>
    <property type="match status" value="1"/>
</dbReference>
<dbReference type="PROSITE" id="PS51882">
    <property type="entry name" value="G_ALPHA"/>
    <property type="match status" value="1"/>
</dbReference>
<reference key="1">
    <citation type="journal article" date="1987" name="FEBS Lett.">
        <title>Molecular cloning of a new human G protein. Evidence for two Gi alpha-like protein families.</title>
        <authorList>
            <person name="Didsbury J.R."/>
            <person name="Snyderman R."/>
        </authorList>
    </citation>
    <scope>NUCLEOTIDE SEQUENCE [MRNA]</scope>
</reference>
<reference key="2">
    <citation type="journal article" date="1987" name="Proc. Natl. Acad. Sci. U.S.A.">
        <title>A small multigene family encodes Gi signal-transduction proteins.</title>
        <authorList>
            <person name="Beals C.R."/>
            <person name="Wilson C.B."/>
            <person name="Perlmutter R.M."/>
        </authorList>
    </citation>
    <scope>NUCLEOTIDE SEQUENCE [MRNA]</scope>
</reference>
<reference key="3">
    <citation type="journal article" date="1988" name="J. Biol. Chem.">
        <title>Presence of three distinct molecular species of Gi protein alpha subunit. Structure of rat cDNAs and human genomic DNAs.</title>
        <authorList>
            <person name="Itoh H."/>
            <person name="Toyama R."/>
            <person name="Kozasa T."/>
            <person name="Tsukamoto T."/>
            <person name="Matsuoka M."/>
            <person name="Kaziro Y."/>
        </authorList>
    </citation>
    <scope>NUCLEOTIDE SEQUENCE [GENOMIC DNA]</scope>
</reference>
<reference key="4">
    <citation type="journal article" date="1988" name="J. Biol. Chem.">
        <title>Alpha i-3 cDNA encodes the alpha subunit of Gk, the stimulatory G protein of receptor-regulated K+ channels.</title>
        <authorList>
            <person name="Codina J."/>
            <person name="Olate J."/>
            <person name="Abramowitz J."/>
            <person name="Mattera R."/>
            <person name="Cook R.G."/>
            <person name="Birnbaumer L."/>
        </authorList>
    </citation>
    <scope>NUCLEOTIDE SEQUENCE [MRNA]</scope>
</reference>
<reference key="5">
    <citation type="journal article" date="1988" name="Proc. Natl. Acad. Sci. U.S.A.">
        <title>Identification of cDNA encoding an additional alpha subunit of a human GTP-binding protein: expression of three alpha i subtypes in human tissues and cell lines.</title>
        <authorList>
            <person name="Kim S."/>
            <person name="Ang S.L."/>
            <person name="Bloch D.B."/>
            <person name="Bloch K.D."/>
            <person name="Kawahara Y."/>
            <person name="Tolman C."/>
            <person name="Lee R."/>
            <person name="Seidman J.G."/>
            <person name="Neer E.J."/>
        </authorList>
    </citation>
    <scope>NUCLEOTIDE SEQUENCE [MRNA]</scope>
</reference>
<reference key="6">
    <citation type="submission" date="2002-03" db="EMBL/GenBank/DDBJ databases">
        <title>cDNA clones of human proteins involved in signal transduction sequenced by the Guthrie cDNA resource center (www.cdna.org).</title>
        <authorList>
            <person name="Puhl H.L. III"/>
            <person name="Ikeda S.R."/>
            <person name="Aronstam R.S."/>
        </authorList>
    </citation>
    <scope>NUCLEOTIDE SEQUENCE [LARGE SCALE MRNA]</scope>
</reference>
<reference key="7">
    <citation type="submission" date="2003-05" db="EMBL/GenBank/DDBJ databases">
        <title>Cloning of human full-length CDSs in BD Creator(TM) system donor vector.</title>
        <authorList>
            <person name="Kalnine N."/>
            <person name="Chen X."/>
            <person name="Rolfs A."/>
            <person name="Halleck A."/>
            <person name="Hines L."/>
            <person name="Eisenstein S."/>
            <person name="Koundinya M."/>
            <person name="Raphael J."/>
            <person name="Moreira D."/>
            <person name="Kelley T."/>
            <person name="LaBaer J."/>
            <person name="Lin Y."/>
            <person name="Phelan M."/>
            <person name="Farmer A."/>
        </authorList>
    </citation>
    <scope>NUCLEOTIDE SEQUENCE [LARGE SCALE MRNA]</scope>
</reference>
<reference key="8">
    <citation type="journal article" date="2004" name="Nat. Genet.">
        <title>Complete sequencing and characterization of 21,243 full-length human cDNAs.</title>
        <authorList>
            <person name="Ota T."/>
            <person name="Suzuki Y."/>
            <person name="Nishikawa T."/>
            <person name="Otsuki T."/>
            <person name="Sugiyama T."/>
            <person name="Irie R."/>
            <person name="Wakamatsu A."/>
            <person name="Hayashi K."/>
            <person name="Sato H."/>
            <person name="Nagai K."/>
            <person name="Kimura K."/>
            <person name="Makita H."/>
            <person name="Sekine M."/>
            <person name="Obayashi M."/>
            <person name="Nishi T."/>
            <person name="Shibahara T."/>
            <person name="Tanaka T."/>
            <person name="Ishii S."/>
            <person name="Yamamoto J."/>
            <person name="Saito K."/>
            <person name="Kawai Y."/>
            <person name="Isono Y."/>
            <person name="Nakamura Y."/>
            <person name="Nagahari K."/>
            <person name="Murakami K."/>
            <person name="Yasuda T."/>
            <person name="Iwayanagi T."/>
            <person name="Wagatsuma M."/>
            <person name="Shiratori A."/>
            <person name="Sudo H."/>
            <person name="Hosoiri T."/>
            <person name="Kaku Y."/>
            <person name="Kodaira H."/>
            <person name="Kondo H."/>
            <person name="Sugawara M."/>
            <person name="Takahashi M."/>
            <person name="Kanda K."/>
            <person name="Yokoi T."/>
            <person name="Furuya T."/>
            <person name="Kikkawa E."/>
            <person name="Omura Y."/>
            <person name="Abe K."/>
            <person name="Kamihara K."/>
            <person name="Katsuta N."/>
            <person name="Sato K."/>
            <person name="Tanikawa M."/>
            <person name="Yamazaki M."/>
            <person name="Ninomiya K."/>
            <person name="Ishibashi T."/>
            <person name="Yamashita H."/>
            <person name="Murakawa K."/>
            <person name="Fujimori K."/>
            <person name="Tanai H."/>
            <person name="Kimata M."/>
            <person name="Watanabe M."/>
            <person name="Hiraoka S."/>
            <person name="Chiba Y."/>
            <person name="Ishida S."/>
            <person name="Ono Y."/>
            <person name="Takiguchi S."/>
            <person name="Watanabe S."/>
            <person name="Yosida M."/>
            <person name="Hotuta T."/>
            <person name="Kusano J."/>
            <person name="Kanehori K."/>
            <person name="Takahashi-Fujii A."/>
            <person name="Hara H."/>
            <person name="Tanase T.-O."/>
            <person name="Nomura Y."/>
            <person name="Togiya S."/>
            <person name="Komai F."/>
            <person name="Hara R."/>
            <person name="Takeuchi K."/>
            <person name="Arita M."/>
            <person name="Imose N."/>
            <person name="Musashino K."/>
            <person name="Yuuki H."/>
            <person name="Oshima A."/>
            <person name="Sasaki N."/>
            <person name="Aotsuka S."/>
            <person name="Yoshikawa Y."/>
            <person name="Matsunawa H."/>
            <person name="Ichihara T."/>
            <person name="Shiohata N."/>
            <person name="Sano S."/>
            <person name="Moriya S."/>
            <person name="Momiyama H."/>
            <person name="Satoh N."/>
            <person name="Takami S."/>
            <person name="Terashima Y."/>
            <person name="Suzuki O."/>
            <person name="Nakagawa S."/>
            <person name="Senoh A."/>
            <person name="Mizoguchi H."/>
            <person name="Goto Y."/>
            <person name="Shimizu F."/>
            <person name="Wakebe H."/>
            <person name="Hishigaki H."/>
            <person name="Watanabe T."/>
            <person name="Sugiyama A."/>
            <person name="Takemoto M."/>
            <person name="Kawakami B."/>
            <person name="Yamazaki M."/>
            <person name="Watanabe K."/>
            <person name="Kumagai A."/>
            <person name="Itakura S."/>
            <person name="Fukuzumi Y."/>
            <person name="Fujimori Y."/>
            <person name="Komiyama M."/>
            <person name="Tashiro H."/>
            <person name="Tanigami A."/>
            <person name="Fujiwara T."/>
            <person name="Ono T."/>
            <person name="Yamada K."/>
            <person name="Fujii Y."/>
            <person name="Ozaki K."/>
            <person name="Hirao M."/>
            <person name="Ohmori Y."/>
            <person name="Kawabata A."/>
            <person name="Hikiji T."/>
            <person name="Kobatake N."/>
            <person name="Inagaki H."/>
            <person name="Ikema Y."/>
            <person name="Okamoto S."/>
            <person name="Okitani R."/>
            <person name="Kawakami T."/>
            <person name="Noguchi S."/>
            <person name="Itoh T."/>
            <person name="Shigeta K."/>
            <person name="Senba T."/>
            <person name="Matsumura K."/>
            <person name="Nakajima Y."/>
            <person name="Mizuno T."/>
            <person name="Morinaga M."/>
            <person name="Sasaki M."/>
            <person name="Togashi T."/>
            <person name="Oyama M."/>
            <person name="Hata H."/>
            <person name="Watanabe M."/>
            <person name="Komatsu T."/>
            <person name="Mizushima-Sugano J."/>
            <person name="Satoh T."/>
            <person name="Shirai Y."/>
            <person name="Takahashi Y."/>
            <person name="Nakagawa K."/>
            <person name="Okumura K."/>
            <person name="Nagase T."/>
            <person name="Nomura N."/>
            <person name="Kikuchi H."/>
            <person name="Masuho Y."/>
            <person name="Yamashita R."/>
            <person name="Nakai K."/>
            <person name="Yada T."/>
            <person name="Nakamura Y."/>
            <person name="Ohara O."/>
            <person name="Isogai T."/>
            <person name="Sugano S."/>
        </authorList>
    </citation>
    <scope>NUCLEOTIDE SEQUENCE [LARGE SCALE MRNA]</scope>
</reference>
<reference key="9">
    <citation type="submission" date="2005-07" db="EMBL/GenBank/DDBJ databases">
        <authorList>
            <person name="Mural R.J."/>
            <person name="Istrail S."/>
            <person name="Sutton G."/>
            <person name="Florea L."/>
            <person name="Halpern A.L."/>
            <person name="Mobarry C.M."/>
            <person name="Lippert R."/>
            <person name="Walenz B."/>
            <person name="Shatkay H."/>
            <person name="Dew I."/>
            <person name="Miller J.R."/>
            <person name="Flanigan M.J."/>
            <person name="Edwards N.J."/>
            <person name="Bolanos R."/>
            <person name="Fasulo D."/>
            <person name="Halldorsson B.V."/>
            <person name="Hannenhalli S."/>
            <person name="Turner R."/>
            <person name="Yooseph S."/>
            <person name="Lu F."/>
            <person name="Nusskern D.R."/>
            <person name="Shue B.C."/>
            <person name="Zheng X.H."/>
            <person name="Zhong F."/>
            <person name="Delcher A.L."/>
            <person name="Huson D.H."/>
            <person name="Kravitz S.A."/>
            <person name="Mouchard L."/>
            <person name="Reinert K."/>
            <person name="Remington K.A."/>
            <person name="Clark A.G."/>
            <person name="Waterman M.S."/>
            <person name="Eichler E.E."/>
            <person name="Adams M.D."/>
            <person name="Hunkapiller M.W."/>
            <person name="Myers E.W."/>
            <person name="Venter J.C."/>
        </authorList>
    </citation>
    <scope>NUCLEOTIDE SEQUENCE [LARGE SCALE GENOMIC DNA]</scope>
</reference>
<reference key="10">
    <citation type="journal article" date="2004" name="Genome Res.">
        <title>The status, quality, and expansion of the NIH full-length cDNA project: the Mammalian Gene Collection (MGC).</title>
        <authorList>
            <consortium name="The MGC Project Team"/>
        </authorList>
    </citation>
    <scope>NUCLEOTIDE SEQUENCE [LARGE SCALE MRNA]</scope>
    <source>
        <tissue>Liver</tissue>
    </source>
</reference>
<reference key="11">
    <citation type="journal article" date="1987" name="FEBS Lett.">
        <title>The human genome encodes at least three non-allelic G proteins with alpha i-type subunits.</title>
        <authorList>
            <person name="Suki W.N."/>
            <person name="Abramowitz J."/>
            <person name="Mattera R."/>
            <person name="Codina J."/>
            <person name="Birnbaumer L."/>
        </authorList>
    </citation>
    <scope>NUCLEOTIDE SEQUENCE [MRNA] OF 21-354</scope>
</reference>
<reference key="12">
    <citation type="journal article" date="1989" name="J. Biol. Chem.">
        <title>Recombinant alpha i-3 subunit of G protein activates Gk-gated K+ channels.</title>
        <authorList>
            <person name="Mattera R."/>
            <person name="Yatani A."/>
            <person name="Kirsch G.E."/>
            <person name="Graf R."/>
            <person name="Okabe K."/>
            <person name="Olate J."/>
            <person name="Codina J."/>
            <person name="Brown A.M."/>
            <person name="Birnbaumer L."/>
        </authorList>
    </citation>
    <scope>FUNCTION</scope>
</reference>
<reference key="13">
    <citation type="journal article" date="1996" name="Nature">
        <title>RGS10 is a selective activator of G alpha i GTPase activity.</title>
        <authorList>
            <person name="Hunt T.W."/>
            <person name="Fields T.A."/>
            <person name="Casey P.J."/>
            <person name="Peralta E.G."/>
        </authorList>
    </citation>
    <scope>FUNCTION</scope>
    <scope>INTERACTION WITH RGS10</scope>
</reference>
<reference key="14">
    <citation type="journal article" date="2007" name="Cell. Signal.">
        <title>Selective interactions between Gi alpha1 and Gi alpha3 and the GoLoco/GPR domain of RGS14 influence its dynamic subcellular localization.</title>
        <authorList>
            <person name="Shu F.J."/>
            <person name="Ramineni S."/>
            <person name="Amyot W."/>
            <person name="Hepler J.R."/>
        </authorList>
    </citation>
    <scope>FUNCTION</scope>
    <scope>INTERACTION WITH RGS14</scope>
    <scope>SUBCELLULAR LOCATION</scope>
</reference>
<reference key="15">
    <citation type="journal article" date="2007" name="J. Cell Biol.">
        <title>Localization of Gi alpha proteins in the centrosomes and at the midbody: implication for their role in cell division.</title>
        <authorList>
            <person name="Cho H."/>
            <person name="Kehrl J.H."/>
        </authorList>
    </citation>
    <scope>FUNCTION</scope>
    <scope>SUBCELLULAR LOCATION</scope>
</reference>
<reference key="16">
    <citation type="journal article" date="2009" name="Proc. Natl. Acad. Sci. U.S.A.">
        <title>GIV is a nonreceptor GEF for G alpha i with a unique motif that regulates Akt signaling.</title>
        <authorList>
            <person name="Garcia-Marcos M."/>
            <person name="Ghosh P."/>
            <person name="Farquhar M.G."/>
        </authorList>
    </citation>
    <scope>INTERACTION WITH CCDC88A</scope>
</reference>
<reference key="17">
    <citation type="journal article" date="2010" name="Mol. Biol. Cell">
        <title>A G{alpha}i-GIV molecular complex binds epidermal growth factor receptor and determines whether cells migrate or proliferate.</title>
        <authorList>
            <person name="Ghosh P."/>
            <person name="Beas A.O."/>
            <person name="Bornheimer S.J."/>
            <person name="Garcia-Marcos M."/>
            <person name="Forry E.P."/>
            <person name="Johannson C."/>
            <person name="Ear J."/>
            <person name="Jung B.H."/>
            <person name="Cabrera B."/>
            <person name="Carethers J.M."/>
            <person name="Farquhar M.G."/>
        </authorList>
    </citation>
    <scope>IDENTIFICATION IN COMPLEX WITH CCDC88A AND EGFR</scope>
</reference>
<reference key="18">
    <citation type="journal article" date="2011" name="BMC Syst. Biol.">
        <title>Initial characterization of the human central proteome.</title>
        <authorList>
            <person name="Burkard T.R."/>
            <person name="Planyavsky M."/>
            <person name="Kaupe I."/>
            <person name="Breitwieser F.P."/>
            <person name="Buerckstuemmer T."/>
            <person name="Bennett K.L."/>
            <person name="Superti-Furga G."/>
            <person name="Colinge J."/>
        </authorList>
    </citation>
    <scope>IDENTIFICATION BY MASS SPECTROMETRY [LARGE SCALE ANALYSIS]</scope>
</reference>
<reference key="19">
    <citation type="journal article" date="2013" name="Nat. Struct. Mol. Biol.">
        <title>A bacterial toxin catalyzing tyrosine glycosylation of Rho and deamidation of Gq and Gi proteins.</title>
        <authorList>
            <person name="Jank T."/>
            <person name="Bogdanovic X."/>
            <person name="Wirth C."/>
            <person name="Haaf E."/>
            <person name="Spoerner M."/>
            <person name="Boehmer K.E."/>
            <person name="Steinemann M."/>
            <person name="Orth J.H."/>
            <person name="Kalbitzer H.R."/>
            <person name="Warscheid B."/>
            <person name="Hunte C."/>
            <person name="Aktories K."/>
        </authorList>
    </citation>
    <scope>DEAMIDATION AT GLN-204 (MICROBIAL INFECTION)</scope>
</reference>
<reference key="20">
    <citation type="journal article" date="2014" name="Mol. Biol. Cell">
        <title>Structural basis for activation of trimeric Gi proteins by multiple growth factor receptors via GIV/Girdin.</title>
        <authorList>
            <person name="Lin C."/>
            <person name="Ear J."/>
            <person name="Midde K."/>
            <person name="Lopez-Sanchez I."/>
            <person name="Aznar N."/>
            <person name="Garcia-Marcos M."/>
            <person name="Kufareva I."/>
            <person name="Abagyan R."/>
            <person name="Ghosh P."/>
        </authorList>
    </citation>
    <scope>INTERACTION WITH CCDC88A AND INSR</scope>
</reference>
<reference key="21">
    <citation type="journal article" date="2014" name="Nat. Commun.">
        <title>Global profiling of co- and post-translationally N-myristoylated proteomes in human cells.</title>
        <authorList>
            <person name="Thinon E."/>
            <person name="Serwa R.A."/>
            <person name="Broncel M."/>
            <person name="Brannigan J.A."/>
            <person name="Brassat U."/>
            <person name="Wright M.H."/>
            <person name="Heal W.P."/>
            <person name="Wilkinson A.J."/>
            <person name="Mann D.J."/>
            <person name="Tate E.W."/>
        </authorList>
    </citation>
    <scope>MYRISTOYLATION AT GLY-2</scope>
    <scope>CLEAVAGE OF INITIATOR METHIONINE</scope>
    <scope>IDENTIFICATION BY MASS SPECTROMETRY</scope>
</reference>
<reference key="22">
    <citation type="journal article" date="2015" name="Elife">
        <title>Daple is a novel non-receptor GEF required for trimeric G protein activation in Wnt signaling.</title>
        <authorList>
            <person name="Aznar N."/>
            <person name="Midde K.K."/>
            <person name="Dunkel Y."/>
            <person name="Lopez-Sanchez I."/>
            <person name="Pavlova Y."/>
            <person name="Marivin A."/>
            <person name="Barbazan J."/>
            <person name="Murray F."/>
            <person name="Nitsche U."/>
            <person name="Janssen K.P."/>
            <person name="Willert K."/>
            <person name="Goel A."/>
            <person name="Abal M."/>
            <person name="Garcia-Marcos M."/>
            <person name="Ghosh P."/>
        </authorList>
    </citation>
    <scope>INTERACTION WITH CCDC88C</scope>
    <scope>MUTAGENESIS OF TRP-211; PHE-215; LYS-248 AND TRP-258</scope>
</reference>
<reference key="23">
    <citation type="journal article" date="2015" name="Proteomics">
        <title>N-terminome analysis of the human mitochondrial proteome.</title>
        <authorList>
            <person name="Vaca Jacome A.S."/>
            <person name="Rabilloud T."/>
            <person name="Schaeffer-Reiss C."/>
            <person name="Rompais M."/>
            <person name="Ayoub D."/>
            <person name="Lane L."/>
            <person name="Bairoch A."/>
            <person name="Van Dorsselaer A."/>
            <person name="Carapito C."/>
        </authorList>
    </citation>
    <scope>IDENTIFICATION BY MASS SPECTROMETRY [LARGE SCALE ANALYSIS]</scope>
</reference>
<reference key="24">
    <citation type="journal article" date="2016" name="J. Biol. Chem.">
        <title>Membrane recruitment of the non-receptor protein GIV/Girdin (Galpha-interacting, Vesicle-associated Protein/Girdin) is sufficient for activating heterotrimeric G protein signaling.</title>
        <authorList>
            <person name="Parag-Sharma K."/>
            <person name="Leyme A."/>
            <person name="DiGiacomo V."/>
            <person name="Marivin A."/>
            <person name="Broselid S."/>
            <person name="Garcia-Marcos M."/>
        </authorList>
    </citation>
    <scope>SUBCELLULAR LOCATION</scope>
</reference>
<reference key="25">
    <citation type="journal article" date="2018" name="J. Biol. Chem.">
        <title>A biochemical and genetic discovery pipeline identifies PLCdelta4b as a nonreceptor activator of heterotrimeric G-proteins.</title>
        <authorList>
            <person name="Maziarz M."/>
            <person name="Broselid S."/>
            <person name="DiGiacomo V."/>
            <person name="Park J.C."/>
            <person name="Luebbers A."/>
            <person name="Garcia-Navarrete L."/>
            <person name="Blanco-Canosa J.B."/>
            <person name="Baillie G.S."/>
            <person name="Garcia-Marcos M."/>
        </authorList>
    </citation>
    <scope>INTERACTION WITH PLCD4</scope>
    <scope>MUTAGENESIS OF LYS-35; LEU-36; LEU-37; LEU-39; GLY-42; ILE-184; TRP-211; PHE-215; VAL-218; LEU-249; SER-252; ASN-256; LYS-257; TRP-258 AND PHE-259</scope>
</reference>
<reference evidence="25 26" key="26">
    <citation type="journal article" date="2008" name="Proc. Natl. Acad. Sci. U.S.A.">
        <title>Structural diversity in the RGS domain and its interaction with heterotrimeric G protein alpha-subunits.</title>
        <authorList>
            <person name="Soundararajan M."/>
            <person name="Willard F.S."/>
            <person name="Kimple A.J."/>
            <person name="Turnbull A.P."/>
            <person name="Ball L.J."/>
            <person name="Schoch G.A."/>
            <person name="Gileadi C."/>
            <person name="Fedorov O.Y."/>
            <person name="Dowler E.F."/>
            <person name="Higman V.A."/>
            <person name="Hutsell S.Q."/>
            <person name="Sundstroem M."/>
            <person name="Doyle D.A."/>
            <person name="Siderovski D.P."/>
        </authorList>
    </citation>
    <scope>X-RAY CRYSTALLOGRAPHY (1.90 ANGSTROMS) OF 4-350 IN COMPLEX WITH GDP AND RGS10</scope>
    <scope>FUNCTION</scope>
    <scope>INTERACTION WITH RGS8 AND RGS10</scope>
</reference>
<reference evidence="27" key="27">
    <citation type="journal article" date="2009" name="J. Biol. Chem.">
        <title>Structural determinants of G-protein alpha subunit selectivity by regulator of G-protein signaling 2 (RGS2).</title>
        <authorList>
            <person name="Kimple A.J."/>
            <person name="Soundararajan M."/>
            <person name="Hutsell S.Q."/>
            <person name="Roos A.K."/>
            <person name="Urban D.J."/>
            <person name="Setola V."/>
            <person name="Temple B.R."/>
            <person name="Roth B.L."/>
            <person name="Knapp S."/>
            <person name="Willard F.S."/>
            <person name="Siderovski D.P."/>
        </authorList>
    </citation>
    <scope>X-RAY CRYSTALLOGRAPHY (2.80 ANGSTROMS) OF 4-350 IN COMPLEX WITH RGS2; MAGNESIUM AND GDP</scope>
    <scope>LACK OF INTERACTION WITH RGS2</scope>
    <scope>INTERACTION WITH RGS16</scope>
    <scope>FUNCTION</scope>
</reference>
<reference evidence="28 29 30" key="28">
    <citation type="journal article" date="2012" name="J. Biol. Chem.">
        <title>Crystal structures of the scaffolding protein LGN reveal the general mechanism by which GoLoco binding motifs inhibit the release of GDP from Galphai.</title>
        <authorList>
            <person name="Jia M."/>
            <person name="Li J."/>
            <person name="Zhu J."/>
            <person name="Wen W."/>
            <person name="Zhang M."/>
            <person name="Wang W."/>
        </authorList>
    </citation>
    <scope>X-RAY CRYSTALLOGRAPHY (2.90 ANGSTROMS) OF 25-354 IN COMPLEX WITH GPSM2 AND GDP</scope>
    <scope>INTERACTION WITH GPSM2</scope>
</reference>
<reference evidence="31 32" key="29">
    <citation type="journal article" date="2023" name="Nat. Commun.">
        <title>Molecular architecture of the Galphai-bound TRPC5 ion channel.</title>
        <authorList>
            <person name="Won J."/>
            <person name="Kim J."/>
            <person name="Jeong H."/>
            <person name="Kim J."/>
            <person name="Feng S."/>
            <person name="Jeong B."/>
            <person name="Kwak M."/>
            <person name="Ko J."/>
            <person name="Im W."/>
            <person name="So I."/>
            <person name="Lee H.H."/>
        </authorList>
    </citation>
    <scope>STRUCTURE BY ELECTRON MICROSCOPY (3.91 ANGSTROMS) OF MUTANT LEU-204 IN COMPLEX WITH CALCIUM; ZINC; PHOSPHOLIPID; GTP AND TRPC5</scope>
    <scope>FUNCTION</scope>
    <scope>SUBUNIT</scope>
</reference>
<reference key="30">
    <citation type="journal article" date="2012" name="Am. J. Hum. Genet.">
        <title>A human homeotic transformation resulting from mutations in PLCB4 and GNAI3 causes auriculocondylar syndrome.</title>
        <authorList>
            <person name="Rieder M.J."/>
            <person name="Green G.E."/>
            <person name="Park S.S."/>
            <person name="Stamper B.D."/>
            <person name="Gordon C.T."/>
            <person name="Johnson J.M."/>
            <person name="Cunniff C.M."/>
            <person name="Smith J.D."/>
            <person name="Emery S.B."/>
            <person name="Lyonnet S."/>
            <person name="Amiel J."/>
            <person name="Holder M."/>
            <person name="Heggie A.A."/>
            <person name="Bamshad M.J."/>
            <person name="Nickerson D.A."/>
            <person name="Cox T.C."/>
            <person name="Hing A.V."/>
            <person name="Horst J.A."/>
            <person name="Cunningham M.L."/>
        </authorList>
    </citation>
    <scope>VARIANT ARCND1 ARG-40</scope>
    <scope>INVOLVEMENT IN ARCND1</scope>
</reference>
<reference key="31">
    <citation type="journal article" date="2012" name="Am. J. Hum. Genet.">
        <authorList>
            <person name="Rieder M.J."/>
            <person name="Green G.E."/>
            <person name="Park S.S."/>
            <person name="Stamper B.D."/>
            <person name="Gordon C.T."/>
            <person name="Johnson J.M."/>
            <person name="Cunniff C.M."/>
            <person name="Smith J.D."/>
            <person name="Emery S.B."/>
            <person name="Lyonnet S."/>
            <person name="Amiel J."/>
            <person name="Holder M."/>
            <person name="Heggie A.A."/>
            <person name="Bamshad M.J."/>
            <person name="Nickerson D.A."/>
            <person name="Cox T.C."/>
            <person name="Hing A.V."/>
            <person name="Horst J.A."/>
            <person name="Cunningham M.L."/>
        </authorList>
    </citation>
    <scope>ERRATUM OF PUBMED:22560091</scope>
</reference>
<reference key="32">
    <citation type="journal article" date="2013" name="J. Med. Genet.">
        <title>Heterogeneity of mutational mechanisms and modes of inheritance in auriculocondylar syndrome.</title>
        <authorList>
            <person name="Gordon C.T."/>
            <person name="Vuillot A."/>
            <person name="Marlin S."/>
            <person name="Gerkes E."/>
            <person name="Henderson A."/>
            <person name="Al-Kindy A."/>
            <person name="Holder-Espinasse M."/>
            <person name="Park S.S."/>
            <person name="Omarjee A."/>
            <person name="Sanchis-Borja M."/>
            <person name="Bdira E.B."/>
            <person name="Oufadem M."/>
            <person name="Sikkema-Raddatz B."/>
            <person name="Stewart A."/>
            <person name="Palmer R."/>
            <person name="McGowan R."/>
            <person name="Petit F."/>
            <person name="Delobel B."/>
            <person name="Speicher M.R."/>
            <person name="Aurora P."/>
            <person name="Kilner D."/>
            <person name="Pellerin P."/>
            <person name="Simon M."/>
            <person name="Bonnefont J.P."/>
            <person name="Tobias E.S."/>
            <person name="Garcia-Minaur S."/>
            <person name="Bitner-Glindzicz M."/>
            <person name="Lindholm P."/>
            <person name="Meijer B.A."/>
            <person name="Abadie V."/>
            <person name="Denoyelle F."/>
            <person name="Vazquez M.P."/>
            <person name="Rotky-Fast C."/>
            <person name="Couloigner V."/>
            <person name="Pierrot S."/>
            <person name="Manach Y."/>
            <person name="Breton S."/>
            <person name="Hendriks Y.M."/>
            <person name="Munnich A."/>
            <person name="Jakobsen L."/>
            <person name="Kroisel P."/>
            <person name="Lin A."/>
            <person name="Kaban L.B."/>
            <person name="Basel-Vanagaite L."/>
            <person name="Wilson L."/>
            <person name="Cunningham M.L."/>
            <person name="Lyonnet S."/>
            <person name="Amiel J."/>
        </authorList>
    </citation>
    <scope>VARIANT ARCND1 ARG-47</scope>
    <scope>INVOLVEMENT IN ARCND1</scope>
</reference>
<reference key="33">
    <citation type="journal article" date="2021" name="BMC Pregnancy Childbirth">
        <title>Prenatal diagnosis of auriculocondylar syndrome with a novel missense variant of GNAI3: a case report.</title>
        <authorList>
            <person name="Liu X."/>
            <person name="Sun W."/>
            <person name="Wang J."/>
            <person name="Chu G."/>
            <person name="He R."/>
            <person name="Zhang B."/>
            <person name="Zhao Y."/>
        </authorList>
    </citation>
    <scope>VARIANT ARCND1 ASN-47</scope>
</reference>
<reference key="34">
    <citation type="journal article" date="2022" name="Hum. Mutat.">
        <title>Further delineation of auriculocondylar syndrome based on 14 novel cases and reassessment of 25 published cases.</title>
        <authorList>
            <person name="Vegas N."/>
            <person name="Demir Z."/>
            <person name="Gordon C.T."/>
            <person name="Breton S."/>
            <person name="Romanelli Tavares V.L."/>
            <person name="Moisset H."/>
            <person name="Zechi-Ceide R."/>
            <person name="Kokitsu-Nakata N.M."/>
            <person name="Kido Y."/>
            <person name="Marlin S."/>
            <person name="Gherbi Halem S."/>
            <person name="Meerschaut I."/>
            <person name="Callewaert B."/>
            <person name="Chung B."/>
            <person name="Revencu N."/>
            <person name="Lehalle D."/>
            <person name="Petit F."/>
            <person name="Propst E.J."/>
            <person name="Papsin B.C."/>
            <person name="Phillips J.H."/>
            <person name="Jakobsen L."/>
            <person name="Le Tanno P."/>
            <person name="Thevenon J."/>
            <person name="McGaughran J."/>
            <person name="Gerkes E.H."/>
            <person name="Leoni C."/>
            <person name="Kroisel P."/>
            <person name="Tan T.Y."/>
            <person name="Henderson A."/>
            <person name="Terhal P."/>
            <person name="Basel-Salmon L."/>
            <person name="Alkindy A."/>
            <person name="White S.M."/>
            <person name="Passos-Bueno M.R."/>
            <person name="Pingault V."/>
            <person name="De Pontual L."/>
            <person name="Amiel J."/>
        </authorList>
    </citation>
    <scope>VARIANTS ARCND1 SER-45 AND ASN-47</scope>
</reference>
<name>GNAI3_HUMAN</name>
<keyword id="KW-0002">3D-structure</keyword>
<keyword id="KW-0013">ADP-ribosylation</keyword>
<keyword id="KW-0131">Cell cycle</keyword>
<keyword id="KW-0132">Cell division</keyword>
<keyword id="KW-1003">Cell membrane</keyword>
<keyword id="KW-0963">Cytoplasm</keyword>
<keyword id="KW-0206">Cytoskeleton</keyword>
<keyword id="KW-0225">Disease variant</keyword>
<keyword id="KW-0342">GTP-binding</keyword>
<keyword id="KW-0449">Lipoprotein</keyword>
<keyword id="KW-0460">Magnesium</keyword>
<keyword id="KW-0472">Membrane</keyword>
<keyword id="KW-0479">Metal-binding</keyword>
<keyword id="KW-0519">Myristate</keyword>
<keyword id="KW-0547">Nucleotide-binding</keyword>
<keyword id="KW-0564">Palmitate</keyword>
<keyword id="KW-1267">Proteomics identification</keyword>
<keyword id="KW-1185">Reference proteome</keyword>
<keyword id="KW-0807">Transducer</keyword>
<organism>
    <name type="scientific">Homo sapiens</name>
    <name type="common">Human</name>
    <dbReference type="NCBI Taxonomy" id="9606"/>
    <lineage>
        <taxon>Eukaryota</taxon>
        <taxon>Metazoa</taxon>
        <taxon>Chordata</taxon>
        <taxon>Craniata</taxon>
        <taxon>Vertebrata</taxon>
        <taxon>Euteleostomi</taxon>
        <taxon>Mammalia</taxon>
        <taxon>Eutheria</taxon>
        <taxon>Euarchontoglires</taxon>
        <taxon>Primates</taxon>
        <taxon>Haplorrhini</taxon>
        <taxon>Catarrhini</taxon>
        <taxon>Hominidae</taxon>
        <taxon>Homo</taxon>
    </lineage>
</organism>
<proteinExistence type="evidence at protein level"/>